<organism>
    <name type="scientific">Syntrophus aciditrophicus (strain SB)</name>
    <dbReference type="NCBI Taxonomy" id="56780"/>
    <lineage>
        <taxon>Bacteria</taxon>
        <taxon>Pseudomonadati</taxon>
        <taxon>Thermodesulfobacteriota</taxon>
        <taxon>Syntrophia</taxon>
        <taxon>Syntrophales</taxon>
        <taxon>Syntrophaceae</taxon>
        <taxon>Syntrophus</taxon>
    </lineage>
</organism>
<protein>
    <recommendedName>
        <fullName evidence="1">Formate--tetrahydrofolate ligase</fullName>
        <ecNumber evidence="1">6.3.4.3</ecNumber>
    </recommendedName>
    <alternativeName>
        <fullName evidence="1">Formyltetrahydrofolate synthetase</fullName>
        <shortName evidence="1">FHS</shortName>
        <shortName evidence="1">FTHFS</shortName>
    </alternativeName>
</protein>
<reference key="1">
    <citation type="journal article" date="2007" name="Proc. Natl. Acad. Sci. U.S.A.">
        <title>The genome of Syntrophus aciditrophicus: life at the thermodynamic limit of microbial growth.</title>
        <authorList>
            <person name="McInerney M.J."/>
            <person name="Rohlin L."/>
            <person name="Mouttaki H."/>
            <person name="Kim U."/>
            <person name="Krupp R.S."/>
            <person name="Rios-Hernandez L."/>
            <person name="Sieber J."/>
            <person name="Struchtemeyer C.G."/>
            <person name="Bhattacharyya A."/>
            <person name="Campbell J.W."/>
            <person name="Gunsalus R.P."/>
        </authorList>
    </citation>
    <scope>NUCLEOTIDE SEQUENCE [LARGE SCALE GENOMIC DNA]</scope>
    <source>
        <strain>SB</strain>
    </source>
</reference>
<sequence>MTHRNSRQDTKELKPIADIAATIGLSEDDIEAYGRYKAKVRLEAISRFHSRPDASLILVSAMTPTPAGEGKTTVSIGLAQALARLGKATIAALREPSLGPVFGMKGGATGGGLSRVHPVDDINLHFTNDFAAVESAHNLLSAIVDNSVYHDNILNIDPRKVTWRRVLDMNDRFLRNIVIGLGGSVNGVPRETGFDIVPSSEIMAILCLSRSYRELKEKIRRILVGFTYDDSPVMAGDLKVEGAVTALLKYALLPNLVQTTENVPAIIHGGPFANIAQGTSSILGTDLALRLADYVVTEAGFGFDLGAEKFFDIVAPYGGLNPRIVVLVATVRALKYHAGIAQADLDRSNPRAAVLGMANLRKHYQNIDKFHVSCVIALNRFSSDTDEEINAVVRAAENEGMNIAPCDIFRLGGEGGLELAEKTLELLAGTSCGYRRLYEWNQPVEDKIFTVASEIYGAVSIDYQPLARRNLDLINKYGFDKLPVCIAKTQQSLSDNPGLLGLPRDFIVTVREIRIASGAGFLIPITGEILRMPGLSKRPAAYSIDIDDSGNITGVGSPGGISSLS</sequence>
<feature type="chain" id="PRO_0000293072" description="Formate--tetrahydrofolate ligase">
    <location>
        <begin position="1"/>
        <end position="565"/>
    </location>
</feature>
<feature type="binding site" evidence="1">
    <location>
        <begin position="65"/>
        <end position="72"/>
    </location>
    <ligand>
        <name>ATP</name>
        <dbReference type="ChEBI" id="CHEBI:30616"/>
    </ligand>
</feature>
<accession>Q2LU82</accession>
<comment type="catalytic activity">
    <reaction evidence="1">
        <text>(6S)-5,6,7,8-tetrahydrofolate + formate + ATP = (6R)-10-formyltetrahydrofolate + ADP + phosphate</text>
        <dbReference type="Rhea" id="RHEA:20221"/>
        <dbReference type="ChEBI" id="CHEBI:15740"/>
        <dbReference type="ChEBI" id="CHEBI:30616"/>
        <dbReference type="ChEBI" id="CHEBI:43474"/>
        <dbReference type="ChEBI" id="CHEBI:57453"/>
        <dbReference type="ChEBI" id="CHEBI:195366"/>
        <dbReference type="ChEBI" id="CHEBI:456216"/>
        <dbReference type="EC" id="6.3.4.3"/>
    </reaction>
</comment>
<comment type="pathway">
    <text evidence="1">One-carbon metabolism; tetrahydrofolate interconversion.</text>
</comment>
<comment type="similarity">
    <text evidence="1">Belongs to the formate--tetrahydrofolate ligase family.</text>
</comment>
<gene>
    <name evidence="1" type="primary">fhs</name>
    <name type="ordered locus">SYNAS_17640</name>
    <name type="ORF">SYN_02008</name>
</gene>
<proteinExistence type="inferred from homology"/>
<keyword id="KW-0067">ATP-binding</keyword>
<keyword id="KW-0436">Ligase</keyword>
<keyword id="KW-0547">Nucleotide-binding</keyword>
<keyword id="KW-0554">One-carbon metabolism</keyword>
<keyword id="KW-1185">Reference proteome</keyword>
<dbReference type="EC" id="6.3.4.3" evidence="1"/>
<dbReference type="EMBL" id="CP000252">
    <property type="protein sequence ID" value="ABC77643.1"/>
    <property type="molecule type" value="Genomic_DNA"/>
</dbReference>
<dbReference type="RefSeq" id="WP_011417665.1">
    <property type="nucleotide sequence ID" value="NC_007759.1"/>
</dbReference>
<dbReference type="SMR" id="Q2LU82"/>
<dbReference type="STRING" id="56780.SYN_02008"/>
<dbReference type="KEGG" id="sat:SYN_02008"/>
<dbReference type="eggNOG" id="COG2759">
    <property type="taxonomic scope" value="Bacteria"/>
</dbReference>
<dbReference type="HOGENOM" id="CLU_003601_3_3_7"/>
<dbReference type="InParanoid" id="Q2LU82"/>
<dbReference type="OrthoDB" id="9761733at2"/>
<dbReference type="UniPathway" id="UPA00193"/>
<dbReference type="Proteomes" id="UP000001933">
    <property type="component" value="Chromosome"/>
</dbReference>
<dbReference type="GO" id="GO:0005524">
    <property type="term" value="F:ATP binding"/>
    <property type="evidence" value="ECO:0007669"/>
    <property type="project" value="UniProtKB-UniRule"/>
</dbReference>
<dbReference type="GO" id="GO:0004329">
    <property type="term" value="F:formate-tetrahydrofolate ligase activity"/>
    <property type="evidence" value="ECO:0007669"/>
    <property type="project" value="UniProtKB-UniRule"/>
</dbReference>
<dbReference type="GO" id="GO:0035999">
    <property type="term" value="P:tetrahydrofolate interconversion"/>
    <property type="evidence" value="ECO:0007669"/>
    <property type="project" value="UniProtKB-UniRule"/>
</dbReference>
<dbReference type="CDD" id="cd00477">
    <property type="entry name" value="FTHFS"/>
    <property type="match status" value="1"/>
</dbReference>
<dbReference type="FunFam" id="3.30.1510.10:FF:000001">
    <property type="entry name" value="Formate--tetrahydrofolate ligase"/>
    <property type="match status" value="1"/>
</dbReference>
<dbReference type="FunFam" id="3.10.410.10:FF:000001">
    <property type="entry name" value="Putative formate--tetrahydrofolate ligase"/>
    <property type="match status" value="1"/>
</dbReference>
<dbReference type="Gene3D" id="3.30.1510.10">
    <property type="entry name" value="Domain 2, N(10)-formyltetrahydrofolate synthetase"/>
    <property type="match status" value="1"/>
</dbReference>
<dbReference type="Gene3D" id="3.10.410.10">
    <property type="entry name" value="Formyltetrahydrofolate synthetase, domain 3"/>
    <property type="match status" value="1"/>
</dbReference>
<dbReference type="Gene3D" id="3.40.50.300">
    <property type="entry name" value="P-loop containing nucleotide triphosphate hydrolases"/>
    <property type="match status" value="1"/>
</dbReference>
<dbReference type="HAMAP" id="MF_01543">
    <property type="entry name" value="FTHFS"/>
    <property type="match status" value="1"/>
</dbReference>
<dbReference type="InterPro" id="IPR000559">
    <property type="entry name" value="Formate_THF_ligase"/>
</dbReference>
<dbReference type="InterPro" id="IPR020628">
    <property type="entry name" value="Formate_THF_ligase_CS"/>
</dbReference>
<dbReference type="InterPro" id="IPR027417">
    <property type="entry name" value="P-loop_NTPase"/>
</dbReference>
<dbReference type="NCBIfam" id="NF010030">
    <property type="entry name" value="PRK13505.1"/>
    <property type="match status" value="1"/>
</dbReference>
<dbReference type="Pfam" id="PF01268">
    <property type="entry name" value="FTHFS"/>
    <property type="match status" value="1"/>
</dbReference>
<dbReference type="SUPFAM" id="SSF52540">
    <property type="entry name" value="P-loop containing nucleoside triphosphate hydrolases"/>
    <property type="match status" value="1"/>
</dbReference>
<dbReference type="PROSITE" id="PS00721">
    <property type="entry name" value="FTHFS_1"/>
    <property type="match status" value="1"/>
</dbReference>
<dbReference type="PROSITE" id="PS00722">
    <property type="entry name" value="FTHFS_2"/>
    <property type="match status" value="1"/>
</dbReference>
<name>FTHS_SYNAS</name>
<evidence type="ECO:0000255" key="1">
    <source>
        <dbReference type="HAMAP-Rule" id="MF_01543"/>
    </source>
</evidence>